<organism>
    <name type="scientific">Methanocaldococcus jannaschii (strain ATCC 43067 / DSM 2661 / JAL-1 / JCM 10045 / NBRC 100440)</name>
    <name type="common">Methanococcus jannaschii</name>
    <dbReference type="NCBI Taxonomy" id="243232"/>
    <lineage>
        <taxon>Archaea</taxon>
        <taxon>Methanobacteriati</taxon>
        <taxon>Methanobacteriota</taxon>
        <taxon>Methanomada group</taxon>
        <taxon>Methanococci</taxon>
        <taxon>Methanococcales</taxon>
        <taxon>Methanocaldococcaceae</taxon>
        <taxon>Methanocaldococcus</taxon>
    </lineage>
</organism>
<dbReference type="EMBL" id="L77117">
    <property type="protein sequence ID" value="AAB98194.1"/>
    <property type="molecule type" value="Genomic_DNA"/>
</dbReference>
<dbReference type="PIR" id="H64325">
    <property type="entry name" value="H64325"/>
</dbReference>
<dbReference type="RefSeq" id="WP_010869702.1">
    <property type="nucleotide sequence ID" value="NC_000909.1"/>
</dbReference>
<dbReference type="STRING" id="243232.MJ_0207"/>
<dbReference type="PaxDb" id="243232-MJ_0207"/>
<dbReference type="EnsemblBacteria" id="AAB98194">
    <property type="protein sequence ID" value="AAB98194"/>
    <property type="gene ID" value="MJ_0207"/>
</dbReference>
<dbReference type="GeneID" id="1451056"/>
<dbReference type="KEGG" id="mja:MJ_0207"/>
<dbReference type="eggNOG" id="arCOG07626">
    <property type="taxonomic scope" value="Archaea"/>
</dbReference>
<dbReference type="HOGENOM" id="CLU_1727252_0_0_2"/>
<dbReference type="InParanoid" id="Q57660"/>
<dbReference type="OrthoDB" id="63409at2157"/>
<dbReference type="Proteomes" id="UP000000805">
    <property type="component" value="Chromosome"/>
</dbReference>
<dbReference type="Gene3D" id="3.30.1380.20">
    <property type="entry name" value="Trafficking protein particle complex subunit 3"/>
    <property type="match status" value="1"/>
</dbReference>
<dbReference type="InterPro" id="IPR024096">
    <property type="entry name" value="NO_sig/Golgi_transp_ligand-bd"/>
</dbReference>
<dbReference type="SUPFAM" id="SSF111126">
    <property type="entry name" value="Ligand-binding domain in the NO signalling and Golgi transport"/>
    <property type="match status" value="1"/>
</dbReference>
<keyword id="KW-1185">Reference proteome</keyword>
<reference key="1">
    <citation type="journal article" date="1996" name="Science">
        <title>Complete genome sequence of the methanogenic archaeon, Methanococcus jannaschii.</title>
        <authorList>
            <person name="Bult C.J."/>
            <person name="White O."/>
            <person name="Olsen G.J."/>
            <person name="Zhou L."/>
            <person name="Fleischmann R.D."/>
            <person name="Sutton G.G."/>
            <person name="Blake J.A."/>
            <person name="FitzGerald L.M."/>
            <person name="Clayton R.A."/>
            <person name="Gocayne J.D."/>
            <person name="Kerlavage A.R."/>
            <person name="Dougherty B.A."/>
            <person name="Tomb J.-F."/>
            <person name="Adams M.D."/>
            <person name="Reich C.I."/>
            <person name="Overbeek R."/>
            <person name="Kirkness E.F."/>
            <person name="Weinstock K.G."/>
            <person name="Merrick J.M."/>
            <person name="Glodek A."/>
            <person name="Scott J.L."/>
            <person name="Geoghagen N.S.M."/>
            <person name="Weidman J.F."/>
            <person name="Fuhrmann J.L."/>
            <person name="Nguyen D."/>
            <person name="Utterback T.R."/>
            <person name="Kelley J.M."/>
            <person name="Peterson J.D."/>
            <person name="Sadow P.W."/>
            <person name="Hanna M.C."/>
            <person name="Cotton M.D."/>
            <person name="Roberts K.M."/>
            <person name="Hurst M.A."/>
            <person name="Kaine B.P."/>
            <person name="Borodovsky M."/>
            <person name="Klenk H.-P."/>
            <person name="Fraser C.M."/>
            <person name="Smith H.O."/>
            <person name="Woese C.R."/>
            <person name="Venter J.C."/>
        </authorList>
    </citation>
    <scope>NUCLEOTIDE SEQUENCE [LARGE SCALE GENOMIC DNA]</scope>
    <source>
        <strain>ATCC 43067 / DSM 2661 / JAL-1 / JCM 10045 / NBRC 100440</strain>
    </source>
</reference>
<protein>
    <recommendedName>
        <fullName>Uncharacterized protein MJ0207</fullName>
    </recommendedName>
</protein>
<sequence>MVLYKIRRSKNDPCPSIPSAVIIGYSVGLKLITGHGAQSLSNMAGSYAGKELGIYAMNNGYEFKDIKDIERFLNQLDFAKIEMNEEEDEIIVKISKCNLCPKRICGYEFEGTACPWGGLLIGFISETLKYNLGYQMNLKPAETCIIKLKKK</sequence>
<name>Y207_METJA</name>
<proteinExistence type="predicted"/>
<gene>
    <name type="ordered locus">MJ0207</name>
</gene>
<feature type="chain" id="PRO_0000106741" description="Uncharacterized protein MJ0207">
    <location>
        <begin position="1"/>
        <end position="151"/>
    </location>
</feature>
<accession>Q57660</accession>